<comment type="function">
    <text evidence="1 2">Acts as a component of the essential kinetochore-associated Ndc80 complex, which is required for chromosome segregation and spindle checkpoint activity during meiosis and mitosis. Required for kinetochore integrity and the organization of stable microtubule binding sites in the outer plate of the kinetochore. Participates in SAC signaling that responds specifically to disruptions in spindle microtubule dynamics. The NDC80 complex synergistically enhances the affinity of the SKA1 complex for microtubules and may allow the NDC80 complex to track depolymerizing microtubules.</text>
</comment>
<comment type="subunit">
    <text evidence="2">Component of the Ndc80 complex, which is composed of Ndc80, Nuf2 and Spc25.</text>
</comment>
<comment type="subcellular location">
    <subcellularLocation>
        <location evidence="2">Nucleus</location>
    </subcellularLocation>
    <subcellularLocation>
        <location evidence="2">Chromosome</location>
        <location evidence="2">Centromere</location>
        <location evidence="2">Kinetochore</location>
    </subcellularLocation>
</comment>
<comment type="similarity">
    <text evidence="3">Belongs to the SPC25 family.</text>
</comment>
<accession>B4PPG0</accession>
<accession>Q64EW4</accession>
<evidence type="ECO:0000250" key="1">
    <source>
        <dbReference type="UniProtKB" id="Q9HBM1"/>
    </source>
</evidence>
<evidence type="ECO:0000250" key="2">
    <source>
        <dbReference type="UniProtKB" id="Q9V3V7"/>
    </source>
</evidence>
<evidence type="ECO:0000255" key="3"/>
<evidence type="ECO:0000305" key="4"/>
<evidence type="ECO:0000312" key="5">
    <source>
        <dbReference type="EMBL" id="AAU15003.1"/>
    </source>
</evidence>
<evidence type="ECO:0000312" key="6">
    <source>
        <dbReference type="EMBL" id="EDW97166.1"/>
    </source>
</evidence>
<gene>
    <name evidence="2" type="primary">Spc25</name>
    <name evidence="5" type="synonym">mitch</name>
    <name type="ORF">GE26225</name>
</gene>
<organism>
    <name type="scientific">Drosophila yakuba</name>
    <name type="common">Fruit fly</name>
    <dbReference type="NCBI Taxonomy" id="7245"/>
    <lineage>
        <taxon>Eukaryota</taxon>
        <taxon>Metazoa</taxon>
        <taxon>Ecdysozoa</taxon>
        <taxon>Arthropoda</taxon>
        <taxon>Hexapoda</taxon>
        <taxon>Insecta</taxon>
        <taxon>Pterygota</taxon>
        <taxon>Neoptera</taxon>
        <taxon>Endopterygota</taxon>
        <taxon>Diptera</taxon>
        <taxon>Brachycera</taxon>
        <taxon>Muscomorpha</taxon>
        <taxon>Ephydroidea</taxon>
        <taxon>Drosophilidae</taxon>
        <taxon>Drosophila</taxon>
        <taxon>Sophophora</taxon>
    </lineage>
</organism>
<dbReference type="EMBL" id="AY714309">
    <property type="protein sequence ID" value="AAU15003.1"/>
    <property type="molecule type" value="Genomic_DNA"/>
</dbReference>
<dbReference type="EMBL" id="CM000160">
    <property type="protein sequence ID" value="EDW97166.1"/>
    <property type="molecule type" value="Genomic_DNA"/>
</dbReference>
<dbReference type="SMR" id="B4PPG0"/>
<dbReference type="EnsemblMetazoa" id="FBtr0272743">
    <property type="protein sequence ID" value="FBpp0271235"/>
    <property type="gene ID" value="FBgn0082377"/>
</dbReference>
<dbReference type="EnsemblMetazoa" id="XM_002097418.3">
    <property type="protein sequence ID" value="XP_002097454.1"/>
    <property type="gene ID" value="LOC6536885"/>
</dbReference>
<dbReference type="GeneID" id="6536885"/>
<dbReference type="KEGG" id="dya:Dyak_GE26225"/>
<dbReference type="eggNOG" id="ENOG502RVT8">
    <property type="taxonomic scope" value="Eukaryota"/>
</dbReference>
<dbReference type="HOGENOM" id="CLU_1246541_0_0_1"/>
<dbReference type="OMA" id="NELMECM"/>
<dbReference type="OrthoDB" id="8006210at2759"/>
<dbReference type="PhylomeDB" id="B4PPG0"/>
<dbReference type="Proteomes" id="UP000002282">
    <property type="component" value="Chromosome 3R"/>
</dbReference>
<dbReference type="GO" id="GO:0031262">
    <property type="term" value="C:Ndc80 complex"/>
    <property type="evidence" value="ECO:0000250"/>
    <property type="project" value="UniProtKB"/>
</dbReference>
<dbReference type="GO" id="GO:0005634">
    <property type="term" value="C:nucleus"/>
    <property type="evidence" value="ECO:0007669"/>
    <property type="project" value="UniProtKB-SubCell"/>
</dbReference>
<dbReference type="GO" id="GO:0051301">
    <property type="term" value="P:cell division"/>
    <property type="evidence" value="ECO:0007669"/>
    <property type="project" value="UniProtKB-KW"/>
</dbReference>
<dbReference type="GO" id="GO:0051311">
    <property type="term" value="P:meiotic metaphase chromosome alignment"/>
    <property type="evidence" value="ECO:0000250"/>
    <property type="project" value="UniProtKB"/>
</dbReference>
<dbReference type="GO" id="GO:0000212">
    <property type="term" value="P:meiotic spindle organization"/>
    <property type="evidence" value="ECO:0000250"/>
    <property type="project" value="UniProtKB"/>
</dbReference>
<dbReference type="GO" id="GO:0007080">
    <property type="term" value="P:mitotic metaphase chromosome alignment"/>
    <property type="evidence" value="ECO:0000250"/>
    <property type="project" value="UniProtKB"/>
</dbReference>
<feature type="chain" id="PRO_0000392429" description="Kinetochore protein Spc25">
    <location>
        <begin position="1"/>
        <end position="223"/>
    </location>
</feature>
<feature type="coiled-coil region" evidence="3">
    <location>
        <begin position="51"/>
        <end position="116"/>
    </location>
</feature>
<feature type="sequence conflict" description="In Ref. 1; AAU15003." evidence="4" ref="1">
    <original>E</original>
    <variation>D</variation>
    <location>
        <position position="79"/>
    </location>
</feature>
<feature type="sequence conflict" description="In Ref. 1; AAU15003." evidence="4" ref="1">
    <original>LAM</original>
    <variation>SVV</variation>
    <location>
        <begin position="92"/>
        <end position="94"/>
    </location>
</feature>
<feature type="sequence conflict" description="In Ref. 1; AAU15003." evidence="4" ref="1">
    <original>P</original>
    <variation>S</variation>
    <location>
        <position position="200"/>
    </location>
</feature>
<name>SPC25_DROYA</name>
<protein>
    <recommendedName>
        <fullName evidence="2">Kinetochore protein Spc25</fullName>
    </recommendedName>
</protein>
<sequence length="223" mass="25629">MAIIMAESSYERRVKALYEKQIRMEALEGKFIKKVYKFNSNLLDVKEAVLRHQRKVGKLQKVVMERREELEKRVSFMEELAQELEATKLRNLAMKDQIKQRKMLARQRKNEIMERIHTLSKTTGTYVNHEALPARVKGVTVLRGDKRDQLIPFDLNATDAEGLDSLCQHLESLNVDVSQWQQLVSLAMDVAMEARAPITPPKEAANCKSIIEIDLTSPTSHQA</sequence>
<keyword id="KW-0131">Cell cycle</keyword>
<keyword id="KW-0132">Cell division</keyword>
<keyword id="KW-0137">Centromere</keyword>
<keyword id="KW-0158">Chromosome</keyword>
<keyword id="KW-0175">Coiled coil</keyword>
<keyword id="KW-0995">Kinetochore</keyword>
<keyword id="KW-0469">Meiosis</keyword>
<keyword id="KW-0498">Mitosis</keyword>
<keyword id="KW-0539">Nucleus</keyword>
<proteinExistence type="inferred from homology"/>
<reference evidence="5" key="1">
    <citation type="journal article" date="2007" name="J. Cell Sci.">
        <title>Mitch a rapidly evolving component of the Ndc80 kinetochore complex required for correct chromosome segregation in Drosophila.</title>
        <authorList>
            <person name="Williams B."/>
            <person name="Leung G."/>
            <person name="Maiato H."/>
            <person name="Wong A."/>
            <person name="Li Z."/>
            <person name="Williams E.V."/>
            <person name="Kirkpatrick C."/>
            <person name="Aquadro C.F."/>
            <person name="Rieder C.L."/>
            <person name="Goldberg M.L."/>
        </authorList>
    </citation>
    <scope>NUCLEOTIDE SEQUENCE [GENOMIC DNA]</scope>
</reference>
<reference evidence="6" key="2">
    <citation type="journal article" date="2007" name="Nature">
        <title>Evolution of genes and genomes on the Drosophila phylogeny.</title>
        <authorList>
            <consortium name="Drosophila 12 genomes consortium"/>
        </authorList>
    </citation>
    <scope>NUCLEOTIDE SEQUENCE [LARGE SCALE GENOMIC DNA]</scope>
    <source>
        <strain evidence="6">Tai18E2 / Tucson 14021-0261.01</strain>
    </source>
</reference>